<accession>Q8C5W0</accession>
<accession>Q91V71</accession>
<accession>Q91XT7</accession>
<accession>Q91XT8</accession>
<accession>Q91XU9</accession>
<gene>
    <name type="primary">Clmn</name>
</gene>
<reference key="1">
    <citation type="journal article" date="2001" name="Genomics">
        <title>Calmin, a protein with calponin homology and transmembrane domains expressed in maturing spermatogenic cells.</title>
        <authorList>
            <person name="Ishisaki Z."/>
            <person name="Takaishi M."/>
            <person name="Furuta I."/>
            <person name="Huh N.-H."/>
        </authorList>
    </citation>
    <scope>NUCLEOTIDE SEQUENCE [MRNA] (ISOFORMS 1; 2; 3 AND 4)</scope>
    <scope>SUBCELLULAR LOCATION</scope>
    <scope>TISSUE SPECIFICITY</scope>
    <source>
        <strain>ICR</strain>
        <tissue>Brain</tissue>
        <tissue>Testis</tissue>
    </source>
</reference>
<reference key="2">
    <citation type="journal article" date="2005" name="Science">
        <title>The transcriptional landscape of the mammalian genome.</title>
        <authorList>
            <person name="Carninci P."/>
            <person name="Kasukawa T."/>
            <person name="Katayama S."/>
            <person name="Gough J."/>
            <person name="Frith M.C."/>
            <person name="Maeda N."/>
            <person name="Oyama R."/>
            <person name="Ravasi T."/>
            <person name="Lenhard B."/>
            <person name="Wells C."/>
            <person name="Kodzius R."/>
            <person name="Shimokawa K."/>
            <person name="Bajic V.B."/>
            <person name="Brenner S.E."/>
            <person name="Batalov S."/>
            <person name="Forrest A.R."/>
            <person name="Zavolan M."/>
            <person name="Davis M.J."/>
            <person name="Wilming L.G."/>
            <person name="Aidinis V."/>
            <person name="Allen J.E."/>
            <person name="Ambesi-Impiombato A."/>
            <person name="Apweiler R."/>
            <person name="Aturaliya R.N."/>
            <person name="Bailey T.L."/>
            <person name="Bansal M."/>
            <person name="Baxter L."/>
            <person name="Beisel K.W."/>
            <person name="Bersano T."/>
            <person name="Bono H."/>
            <person name="Chalk A.M."/>
            <person name="Chiu K.P."/>
            <person name="Choudhary V."/>
            <person name="Christoffels A."/>
            <person name="Clutterbuck D.R."/>
            <person name="Crowe M.L."/>
            <person name="Dalla E."/>
            <person name="Dalrymple B.P."/>
            <person name="de Bono B."/>
            <person name="Della Gatta G."/>
            <person name="di Bernardo D."/>
            <person name="Down T."/>
            <person name="Engstrom P."/>
            <person name="Fagiolini M."/>
            <person name="Faulkner G."/>
            <person name="Fletcher C.F."/>
            <person name="Fukushima T."/>
            <person name="Furuno M."/>
            <person name="Futaki S."/>
            <person name="Gariboldi M."/>
            <person name="Georgii-Hemming P."/>
            <person name="Gingeras T.R."/>
            <person name="Gojobori T."/>
            <person name="Green R.E."/>
            <person name="Gustincich S."/>
            <person name="Harbers M."/>
            <person name="Hayashi Y."/>
            <person name="Hensch T.K."/>
            <person name="Hirokawa N."/>
            <person name="Hill D."/>
            <person name="Huminiecki L."/>
            <person name="Iacono M."/>
            <person name="Ikeo K."/>
            <person name="Iwama A."/>
            <person name="Ishikawa T."/>
            <person name="Jakt M."/>
            <person name="Kanapin A."/>
            <person name="Katoh M."/>
            <person name="Kawasawa Y."/>
            <person name="Kelso J."/>
            <person name="Kitamura H."/>
            <person name="Kitano H."/>
            <person name="Kollias G."/>
            <person name="Krishnan S.P."/>
            <person name="Kruger A."/>
            <person name="Kummerfeld S.K."/>
            <person name="Kurochkin I.V."/>
            <person name="Lareau L.F."/>
            <person name="Lazarevic D."/>
            <person name="Lipovich L."/>
            <person name="Liu J."/>
            <person name="Liuni S."/>
            <person name="McWilliam S."/>
            <person name="Madan Babu M."/>
            <person name="Madera M."/>
            <person name="Marchionni L."/>
            <person name="Matsuda H."/>
            <person name="Matsuzawa S."/>
            <person name="Miki H."/>
            <person name="Mignone F."/>
            <person name="Miyake S."/>
            <person name="Morris K."/>
            <person name="Mottagui-Tabar S."/>
            <person name="Mulder N."/>
            <person name="Nakano N."/>
            <person name="Nakauchi H."/>
            <person name="Ng P."/>
            <person name="Nilsson R."/>
            <person name="Nishiguchi S."/>
            <person name="Nishikawa S."/>
            <person name="Nori F."/>
            <person name="Ohara O."/>
            <person name="Okazaki Y."/>
            <person name="Orlando V."/>
            <person name="Pang K.C."/>
            <person name="Pavan W.J."/>
            <person name="Pavesi G."/>
            <person name="Pesole G."/>
            <person name="Petrovsky N."/>
            <person name="Piazza S."/>
            <person name="Reed J."/>
            <person name="Reid J.F."/>
            <person name="Ring B.Z."/>
            <person name="Ringwald M."/>
            <person name="Rost B."/>
            <person name="Ruan Y."/>
            <person name="Salzberg S.L."/>
            <person name="Sandelin A."/>
            <person name="Schneider C."/>
            <person name="Schoenbach C."/>
            <person name="Sekiguchi K."/>
            <person name="Semple C.A."/>
            <person name="Seno S."/>
            <person name="Sessa L."/>
            <person name="Sheng Y."/>
            <person name="Shibata Y."/>
            <person name="Shimada H."/>
            <person name="Shimada K."/>
            <person name="Silva D."/>
            <person name="Sinclair B."/>
            <person name="Sperling S."/>
            <person name="Stupka E."/>
            <person name="Sugiura K."/>
            <person name="Sultana R."/>
            <person name="Takenaka Y."/>
            <person name="Taki K."/>
            <person name="Tammoja K."/>
            <person name="Tan S.L."/>
            <person name="Tang S."/>
            <person name="Taylor M.S."/>
            <person name="Tegner J."/>
            <person name="Teichmann S.A."/>
            <person name="Ueda H.R."/>
            <person name="van Nimwegen E."/>
            <person name="Verardo R."/>
            <person name="Wei C.L."/>
            <person name="Yagi K."/>
            <person name="Yamanishi H."/>
            <person name="Zabarovsky E."/>
            <person name="Zhu S."/>
            <person name="Zimmer A."/>
            <person name="Hide W."/>
            <person name="Bult C."/>
            <person name="Grimmond S.M."/>
            <person name="Teasdale R.D."/>
            <person name="Liu E.T."/>
            <person name="Brusic V."/>
            <person name="Quackenbush J."/>
            <person name="Wahlestedt C."/>
            <person name="Mattick J.S."/>
            <person name="Hume D.A."/>
            <person name="Kai C."/>
            <person name="Sasaki D."/>
            <person name="Tomaru Y."/>
            <person name="Fukuda S."/>
            <person name="Kanamori-Katayama M."/>
            <person name="Suzuki M."/>
            <person name="Aoki J."/>
            <person name="Arakawa T."/>
            <person name="Iida J."/>
            <person name="Imamura K."/>
            <person name="Itoh M."/>
            <person name="Kato T."/>
            <person name="Kawaji H."/>
            <person name="Kawagashira N."/>
            <person name="Kawashima T."/>
            <person name="Kojima M."/>
            <person name="Kondo S."/>
            <person name="Konno H."/>
            <person name="Nakano K."/>
            <person name="Ninomiya N."/>
            <person name="Nishio T."/>
            <person name="Okada M."/>
            <person name="Plessy C."/>
            <person name="Shibata K."/>
            <person name="Shiraki T."/>
            <person name="Suzuki S."/>
            <person name="Tagami M."/>
            <person name="Waki K."/>
            <person name="Watahiki A."/>
            <person name="Okamura-Oho Y."/>
            <person name="Suzuki H."/>
            <person name="Kawai J."/>
            <person name="Hayashizaki Y."/>
        </authorList>
    </citation>
    <scope>NUCLEOTIDE SEQUENCE [LARGE SCALE MRNA] OF 98-1052 (ISOFORM 1)</scope>
    <source>
        <strain>C57BL/6J</strain>
        <tissue>Testis</tissue>
    </source>
</reference>
<reference key="3">
    <citation type="journal article" date="2003" name="Brain Res. Mol. Brain Res.">
        <title>Expression of calmin, a novel developmentally regulated brain protein with calponin-homology domains.</title>
        <authorList>
            <person name="Takaishi M."/>
            <person name="Ishisaki Z."/>
            <person name="Yoshida T."/>
            <person name="Takata Y."/>
            <person name="Huh N.-H."/>
        </authorList>
    </citation>
    <scope>TISSUE SPECIFICITY</scope>
</reference>
<reference key="4">
    <citation type="journal article" date="2006" name="Mol. Cell. Proteomics">
        <title>Comprehensive identification of phosphorylation sites in postsynaptic density preparations.</title>
        <authorList>
            <person name="Trinidad J.C."/>
            <person name="Specht C.G."/>
            <person name="Thalhammer A."/>
            <person name="Schoepfer R."/>
            <person name="Burlingame A.L."/>
        </authorList>
    </citation>
    <scope>IDENTIFICATION BY MASS SPECTROMETRY [LARGE SCALE ANALYSIS]</scope>
    <source>
        <tissue>Brain</tissue>
    </source>
</reference>
<reference key="5">
    <citation type="journal article" date="2007" name="Proc. Natl. Acad. Sci. U.S.A.">
        <title>Large-scale phosphorylation analysis of mouse liver.</title>
        <authorList>
            <person name="Villen J."/>
            <person name="Beausoleil S.A."/>
            <person name="Gerber S.A."/>
            <person name="Gygi S.P."/>
        </authorList>
    </citation>
    <scope>PHOSPHORYLATION [LARGE SCALE ANALYSIS] AT SER-537</scope>
    <scope>IDENTIFICATION BY MASS SPECTROMETRY [LARGE SCALE ANALYSIS]</scope>
    <source>
        <tissue>Liver</tissue>
    </source>
</reference>
<reference key="6">
    <citation type="journal article" date="2010" name="Cell">
        <title>A tissue-specific atlas of mouse protein phosphorylation and expression.</title>
        <authorList>
            <person name="Huttlin E.L."/>
            <person name="Jedrychowski M.P."/>
            <person name="Elias J.E."/>
            <person name="Goswami T."/>
            <person name="Rad R."/>
            <person name="Beausoleil S.A."/>
            <person name="Villen J."/>
            <person name="Haas W."/>
            <person name="Sowa M.E."/>
            <person name="Gygi S.P."/>
        </authorList>
    </citation>
    <scope>PHOSPHORYLATION [LARGE SCALE ANALYSIS] AT SER-679 AND SER-925</scope>
    <scope>IDENTIFICATION BY MASS SPECTROMETRY [LARGE SCALE ANALYSIS]</scope>
    <source>
        <tissue>Brain</tissue>
        <tissue>Kidney</tissue>
        <tissue>Liver</tissue>
        <tissue>Pancreas</tissue>
    </source>
</reference>
<keyword id="KW-0009">Actin-binding</keyword>
<keyword id="KW-0025">Alternative splicing</keyword>
<keyword id="KW-0963">Cytoplasm</keyword>
<keyword id="KW-0472">Membrane</keyword>
<keyword id="KW-0597">Phosphoprotein</keyword>
<keyword id="KW-1185">Reference proteome</keyword>
<keyword id="KW-0677">Repeat</keyword>
<keyword id="KW-0812">Transmembrane</keyword>
<keyword id="KW-1133">Transmembrane helix</keyword>
<evidence type="ECO:0000250" key="1">
    <source>
        <dbReference type="UniProtKB" id="Q96JQ2"/>
    </source>
</evidence>
<evidence type="ECO:0000255" key="2"/>
<evidence type="ECO:0000255" key="3">
    <source>
        <dbReference type="PROSITE-ProRule" id="PRU00044"/>
    </source>
</evidence>
<evidence type="ECO:0000256" key="4">
    <source>
        <dbReference type="SAM" id="MobiDB-lite"/>
    </source>
</evidence>
<evidence type="ECO:0000269" key="5">
    <source>
    </source>
</evidence>
<evidence type="ECO:0000269" key="6">
    <source>
    </source>
</evidence>
<evidence type="ECO:0000303" key="7">
    <source>
    </source>
</evidence>
<evidence type="ECO:0000305" key="8"/>
<evidence type="ECO:0007744" key="9">
    <source>
    </source>
</evidence>
<evidence type="ECO:0007744" key="10">
    <source>
    </source>
</evidence>
<feature type="chain" id="PRO_0000089855" description="Calmin">
    <location>
        <begin position="1"/>
        <end position="1052"/>
    </location>
</feature>
<feature type="transmembrane region" description="Helical; Anchor for type IV membrane protein" evidence="2">
    <location>
        <begin position="1027"/>
        <end position="1047"/>
    </location>
</feature>
<feature type="domain" description="Calponin-homology (CH) 1" evidence="3">
    <location>
        <begin position="32"/>
        <end position="139"/>
    </location>
</feature>
<feature type="domain" description="Calponin-homology (CH) 2" evidence="3">
    <location>
        <begin position="187"/>
        <end position="291"/>
    </location>
</feature>
<feature type="region of interest" description="Actin-binding">
    <location>
        <begin position="1"/>
        <end position="288"/>
    </location>
</feature>
<feature type="region of interest" description="Disordered" evidence="4">
    <location>
        <begin position="148"/>
        <end position="178"/>
    </location>
</feature>
<feature type="region of interest" description="Disordered" evidence="4">
    <location>
        <begin position="391"/>
        <end position="420"/>
    </location>
</feature>
<feature type="region of interest" description="Disordered" evidence="4">
    <location>
        <begin position="455"/>
        <end position="545"/>
    </location>
</feature>
<feature type="region of interest" description="Disordered" evidence="4">
    <location>
        <begin position="585"/>
        <end position="727"/>
    </location>
</feature>
<feature type="region of interest" description="Disordered" evidence="4">
    <location>
        <begin position="758"/>
        <end position="929"/>
    </location>
</feature>
<feature type="compositionally biased region" description="Low complexity" evidence="4">
    <location>
        <begin position="148"/>
        <end position="168"/>
    </location>
</feature>
<feature type="compositionally biased region" description="Basic and acidic residues" evidence="4">
    <location>
        <begin position="455"/>
        <end position="465"/>
    </location>
</feature>
<feature type="compositionally biased region" description="Basic and acidic residues" evidence="4">
    <location>
        <begin position="472"/>
        <end position="495"/>
    </location>
</feature>
<feature type="compositionally biased region" description="Polar residues" evidence="4">
    <location>
        <begin position="509"/>
        <end position="529"/>
    </location>
</feature>
<feature type="compositionally biased region" description="Basic and acidic residues" evidence="4">
    <location>
        <begin position="594"/>
        <end position="614"/>
    </location>
</feature>
<feature type="compositionally biased region" description="Basic and acidic residues" evidence="4">
    <location>
        <begin position="622"/>
        <end position="651"/>
    </location>
</feature>
<feature type="compositionally biased region" description="Basic and acidic residues" evidence="4">
    <location>
        <begin position="659"/>
        <end position="669"/>
    </location>
</feature>
<feature type="compositionally biased region" description="Basic and acidic residues" evidence="4">
    <location>
        <begin position="711"/>
        <end position="720"/>
    </location>
</feature>
<feature type="compositionally biased region" description="Basic and acidic residues" evidence="4">
    <location>
        <begin position="759"/>
        <end position="773"/>
    </location>
</feature>
<feature type="compositionally biased region" description="Acidic residues" evidence="4">
    <location>
        <begin position="780"/>
        <end position="791"/>
    </location>
</feature>
<feature type="compositionally biased region" description="Low complexity" evidence="4">
    <location>
        <begin position="792"/>
        <end position="801"/>
    </location>
</feature>
<feature type="compositionally biased region" description="Basic and acidic residues" evidence="4">
    <location>
        <begin position="836"/>
        <end position="849"/>
    </location>
</feature>
<feature type="compositionally biased region" description="Basic residues" evidence="4">
    <location>
        <begin position="880"/>
        <end position="889"/>
    </location>
</feature>
<feature type="modified residue" description="Phosphoserine" evidence="9">
    <location>
        <position position="537"/>
    </location>
</feature>
<feature type="modified residue" description="Phosphoserine" evidence="10">
    <location>
        <position position="679"/>
    </location>
</feature>
<feature type="modified residue" description="Phosphothreonine" evidence="1">
    <location>
        <position position="710"/>
    </location>
</feature>
<feature type="modified residue" description="Phosphoserine" evidence="1">
    <location>
        <position position="724"/>
    </location>
</feature>
<feature type="modified residue" description="Phosphoserine" evidence="1">
    <location>
        <position position="856"/>
    </location>
</feature>
<feature type="modified residue" description="Phosphoserine" evidence="10">
    <location>
        <position position="925"/>
    </location>
</feature>
<feature type="splice variant" id="VSP_007766" description="In isoform 2." evidence="7">
    <original>NSHSDS</original>
    <variation>TVIPFL</variation>
    <location>
        <begin position="922"/>
        <end position="927"/>
    </location>
</feature>
<feature type="splice variant" id="VSP_007767" description="In isoform 2." evidence="7">
    <location>
        <begin position="928"/>
        <end position="1052"/>
    </location>
</feature>
<feature type="splice variant" id="VSP_007768" description="In isoform 3." evidence="7">
    <original>DHFSY</original>
    <variation>SFHLY</variation>
    <location>
        <begin position="942"/>
        <end position="946"/>
    </location>
</feature>
<feature type="splice variant" id="VSP_007769" description="In isoform 3." evidence="7">
    <location>
        <begin position="947"/>
        <end position="1052"/>
    </location>
</feature>
<feature type="splice variant" id="VSP_007770" description="In isoform 4." evidence="7">
    <location>
        <begin position="966"/>
        <end position="996"/>
    </location>
</feature>
<feature type="sequence conflict" description="In Ref. 2; BAC36573." evidence="8" ref="2">
    <location>
        <position position="170"/>
    </location>
</feature>
<feature type="sequence conflict" description="In Ref. 2; BAC36573." evidence="8" ref="2">
    <original>S</original>
    <variation>R</variation>
    <location>
        <position position="1012"/>
    </location>
</feature>
<sequence>MAAQEWDWFQREELIGQISDIRVQNLQVERENVQKRTFTRWINLHLEKCDPPLEVTDLFVDIQDGKILMALLEVLSGRNLLHEYKSSSHRIFRLNNIAKALKFLEDSNVKLVSIDAAEIADGNPSLVLGLIWNIILFFQIKELTGNLSRSSPSSSLSPGSGGTDSDSSYPPTPTTERSVAVAVKDQRKAIKTLLSWVQRKTRKYGVAVQDFAGSWRSGLAFLAVIKAIDPSLVDMKQALEDSTRDNLEKAFSIAHDSLHIPRLLEPEDIMVDMPDEQSIVTYVAQFLERFPELEPEDFVNPDKEAPIESTFVRIKESPSEQGSRVLLLSENGERAYTVNQETSYPPPDKVFVCDQLESPTGFCLDSAPSHKLSDSSTEFMHEIIDQVLQGSTGKTGSIAEPTPESSILSTRKDGRRSNSLPVKKTVHFEADLHKDASCSKDPFYSSDFRFEGSPKATKELSKQDGHVSLAEVSKEKKKSEQEARLVLEAASDKVPESTVDGLDAVPQDAQPSQDSSFCNGTVESPSSQGEKGPPPSSPGDHTLLANSTELKVQLLTVEPMDKEDYFECIPLKASKFNRDLVDFASTSQAFGEDPSSHEKTRGEEEGSENHAEKPGKRKSKSPRAETEAAESRLEPKKLEPPPKDPEQEDQGHALPPETPADKKPKVYEKAKRKSTRHHSEEEGEAESGFSAVCEEEIPSAPPSTSVSLETLRSHSEEGLDFKPSPPLSKISVIPHDLFYYPHYEVPLAAVLEAYAEGGEDLKSEDTDLEHPEDSYLQDSREEEADEDEEEAQSSQSSCSFSLPVDNSYPSVSEHVSHVDGSSEGPTSALGPGSPPSHEDHQPKETKENGPVESQQSQEPPNPELPTKPLEEKLTEASTSSKKKEKRKHMDHVESSLFIAPGTVRSSDDLEENSSEHKVPSRNSHSDSSIYIRRHTNRSLELDHFSYVQLRNAADLDDRRNRVLNRYNSQKLTELILQFYGIRADMKREYKHARLSMTGTNSSGEAVPLGNQSPPNDSLTQFVQQPDVIYFILFLWLLVYCLLLFPQLDVSRL</sequence>
<comment type="subcellular location">
    <molecule>Isoform 1</molecule>
    <subcellularLocation>
        <location evidence="8">Membrane</location>
        <topology evidence="8">Single-pass type IV membrane protein</topology>
    </subcellularLocation>
    <text>Shows a reticular pattern in the cytoplasm.</text>
</comment>
<comment type="subcellular location">
    <molecule>Isoform 4</molecule>
    <subcellularLocation>
        <location evidence="8">Membrane</location>
        <topology evidence="8">Single-pass type IV membrane protein</topology>
    </subcellularLocation>
    <text>Shows a reticular pattern in the cytoplasm.</text>
</comment>
<comment type="subcellular location">
    <molecule>Isoform 2</molecule>
    <subcellularLocation>
        <location>Cytoplasm</location>
    </subcellularLocation>
</comment>
<comment type="subcellular location">
    <molecule>Isoform 3</molecule>
    <subcellularLocation>
        <location>Cytoplasm</location>
    </subcellularLocation>
</comment>
<comment type="alternative products">
    <event type="alternative splicing"/>
    <isoform>
        <id>Q8C5W0-1</id>
        <name>1</name>
        <name>Beta</name>
        <sequence type="displayed"/>
    </isoform>
    <isoform>
        <id>Q8C5W0-2</id>
        <name>2</name>
        <name>Delta</name>
        <sequence type="described" ref="VSP_007766 VSP_007767"/>
    </isoform>
    <isoform>
        <id>Q8C5W0-3</id>
        <name>3</name>
        <name>Gamma</name>
        <sequence type="described" ref="VSP_007768 VSP_007769"/>
    </isoform>
    <isoform>
        <id>Q8C5W0-4</id>
        <name>4</name>
        <name>Alpha</name>
        <sequence type="described" ref="VSP_007770"/>
    </isoform>
</comment>
<comment type="tissue specificity">
    <text evidence="5 6">Expressed in testis. Expressed during testis maturation process and in maturing spermatids. In brain, it is expressed in neurons of the hippocampus, cerebral cortex, and thalamus, Purkinje cells, and also in the choroid plexus and ependymal cells. Expressed predominantly in dendrites and cell bodies of the neurons, but not in axons. The level of expression increases during the period of maturation of the mouse brain after birth.</text>
</comment>
<comment type="miscellaneous">
    <molecule>Isoform 2</molecule>
    <text evidence="8">Lacks the transmembrane domain.</text>
</comment>
<comment type="miscellaneous">
    <molecule>Isoform 3</molecule>
    <text evidence="8">Lacks the transmembrane domain.</text>
</comment>
<protein>
    <recommendedName>
        <fullName>Calmin</fullName>
    </recommendedName>
    <alternativeName>
        <fullName>Calponin-like transmembrane domain protein</fullName>
    </alternativeName>
</protein>
<dbReference type="EMBL" id="AB047978">
    <property type="protein sequence ID" value="BAB59009.1"/>
    <property type="molecule type" value="mRNA"/>
</dbReference>
<dbReference type="EMBL" id="AB059643">
    <property type="protein sequence ID" value="BAB59120.1"/>
    <property type="molecule type" value="mRNA"/>
</dbReference>
<dbReference type="EMBL" id="AB059644">
    <property type="protein sequence ID" value="BAB59121.1"/>
    <property type="molecule type" value="mRNA"/>
</dbReference>
<dbReference type="EMBL" id="AB059645">
    <property type="protein sequence ID" value="BAB59122.1"/>
    <property type="molecule type" value="mRNA"/>
</dbReference>
<dbReference type="EMBL" id="AB059646">
    <property type="protein sequence ID" value="BAB59123.1"/>
    <property type="molecule type" value="mRNA"/>
</dbReference>
<dbReference type="EMBL" id="AB059647">
    <property type="protein sequence ID" value="BAB59124.1"/>
    <property type="molecule type" value="mRNA"/>
</dbReference>
<dbReference type="EMBL" id="AB059648">
    <property type="protein sequence ID" value="BAB59125.1"/>
    <property type="molecule type" value="mRNA"/>
</dbReference>
<dbReference type="EMBL" id="AK077023">
    <property type="protein sequence ID" value="BAC36573.1"/>
    <property type="molecule type" value="mRNA"/>
</dbReference>
<dbReference type="CCDS" id="CCDS36540.1">
    <molecule id="Q8C5W0-4"/>
</dbReference>
<dbReference type="CCDS" id="CCDS36541.1">
    <molecule id="Q8C5W0-1"/>
</dbReference>
<dbReference type="RefSeq" id="NP_001035772.1">
    <molecule id="Q8C5W0-4"/>
    <property type="nucleotide sequence ID" value="NM_001040682.1"/>
</dbReference>
<dbReference type="RefSeq" id="NP_444385.2">
    <molecule id="Q8C5W0-1"/>
    <property type="nucleotide sequence ID" value="NM_053155.2"/>
</dbReference>
<dbReference type="SMR" id="Q8C5W0"/>
<dbReference type="BioGRID" id="220420">
    <property type="interactions" value="6"/>
</dbReference>
<dbReference type="FunCoup" id="Q8C5W0">
    <property type="interactions" value="128"/>
</dbReference>
<dbReference type="IntAct" id="Q8C5W0">
    <property type="interactions" value="2"/>
</dbReference>
<dbReference type="MINT" id="Q8C5W0"/>
<dbReference type="STRING" id="10090.ENSMUSP00000105563"/>
<dbReference type="GlyGen" id="Q8C5W0">
    <property type="glycosylation" value="5 sites, 3 N-linked glycans (3 sites)"/>
</dbReference>
<dbReference type="iPTMnet" id="Q8C5W0"/>
<dbReference type="PhosphoSitePlus" id="Q8C5W0"/>
<dbReference type="SwissPalm" id="Q8C5W0"/>
<dbReference type="jPOST" id="Q8C5W0"/>
<dbReference type="PaxDb" id="10090-ENSMUSP00000105563"/>
<dbReference type="PeptideAtlas" id="Q8C5W0"/>
<dbReference type="ProteomicsDB" id="279109">
    <molecule id="Q8C5W0-1"/>
</dbReference>
<dbReference type="ProteomicsDB" id="279110">
    <molecule id="Q8C5W0-2"/>
</dbReference>
<dbReference type="ProteomicsDB" id="279111">
    <molecule id="Q8C5W0-3"/>
</dbReference>
<dbReference type="ProteomicsDB" id="279112">
    <molecule id="Q8C5W0-4"/>
</dbReference>
<dbReference type="Antibodypedia" id="1167">
    <property type="antibodies" value="51 antibodies from 14 providers"/>
</dbReference>
<dbReference type="DNASU" id="94040"/>
<dbReference type="Ensembl" id="ENSMUST00000109936.3">
    <molecule id="Q8C5W0-4"/>
    <property type="protein sequence ID" value="ENSMUSP00000105562.2"/>
    <property type="gene ID" value="ENSMUSG00000021097.16"/>
</dbReference>
<dbReference type="Ensembl" id="ENSMUST00000109937.9">
    <molecule id="Q8C5W0-1"/>
    <property type="protein sequence ID" value="ENSMUSP00000105563.2"/>
    <property type="gene ID" value="ENSMUSG00000021097.16"/>
</dbReference>
<dbReference type="Ensembl" id="ENSMUST00000223103.2">
    <molecule id="Q8C5W0-2"/>
    <property type="protein sequence ID" value="ENSMUSP00000152228.2"/>
    <property type="gene ID" value="ENSMUSG00000021097.16"/>
</dbReference>
<dbReference type="Ensembl" id="ENSMUST00000223177.2">
    <molecule id="Q8C5W0-2"/>
    <property type="protein sequence ID" value="ENSMUSP00000152097.2"/>
    <property type="gene ID" value="ENSMUSG00000021097.16"/>
</dbReference>
<dbReference type="Ensembl" id="ENSMUST00000223342.2">
    <molecule id="Q8C5W0-2"/>
    <property type="protein sequence ID" value="ENSMUSP00000152070.2"/>
    <property type="gene ID" value="ENSMUSG00000021097.16"/>
</dbReference>
<dbReference type="GeneID" id="94040"/>
<dbReference type="KEGG" id="mmu:94040"/>
<dbReference type="UCSC" id="uc007oxl.1">
    <molecule id="Q8C5W0-1"/>
    <property type="organism name" value="mouse"/>
</dbReference>
<dbReference type="UCSC" id="uc011yrj.1">
    <molecule id="Q8C5W0-4"/>
    <property type="organism name" value="mouse"/>
</dbReference>
<dbReference type="AGR" id="MGI:2136957"/>
<dbReference type="CTD" id="79789"/>
<dbReference type="MGI" id="MGI:2136957">
    <property type="gene designation" value="Clmn"/>
</dbReference>
<dbReference type="VEuPathDB" id="HostDB:ENSMUSG00000021097"/>
<dbReference type="eggNOG" id="KOG0516">
    <property type="taxonomic scope" value="Eukaryota"/>
</dbReference>
<dbReference type="GeneTree" id="ENSGT00940000159056"/>
<dbReference type="HOGENOM" id="CLU_014038_0_0_1"/>
<dbReference type="InParanoid" id="Q8C5W0"/>
<dbReference type="OMA" id="PHELFYY"/>
<dbReference type="OrthoDB" id="10017054at2759"/>
<dbReference type="PhylomeDB" id="Q8C5W0"/>
<dbReference type="TreeFam" id="TF317709"/>
<dbReference type="BioGRID-ORCS" id="94040">
    <property type="hits" value="3 hits in 77 CRISPR screens"/>
</dbReference>
<dbReference type="CD-CODE" id="CE726F99">
    <property type="entry name" value="Postsynaptic density"/>
</dbReference>
<dbReference type="ChiTaRS" id="Clmn">
    <property type="organism name" value="mouse"/>
</dbReference>
<dbReference type="PRO" id="PR:Q8C5W0"/>
<dbReference type="Proteomes" id="UP000000589">
    <property type="component" value="Chromosome 12"/>
</dbReference>
<dbReference type="RNAct" id="Q8C5W0">
    <property type="molecule type" value="protein"/>
</dbReference>
<dbReference type="Bgee" id="ENSMUSG00000021097">
    <property type="expression patterns" value="Expressed in seminiferous tubule of testis and 230 other cell types or tissues"/>
</dbReference>
<dbReference type="ExpressionAtlas" id="Q8C5W0">
    <property type="expression patterns" value="baseline and differential"/>
</dbReference>
<dbReference type="GO" id="GO:0005737">
    <property type="term" value="C:cytoplasm"/>
    <property type="evidence" value="ECO:0000314"/>
    <property type="project" value="MGI"/>
</dbReference>
<dbReference type="GO" id="GO:0016020">
    <property type="term" value="C:membrane"/>
    <property type="evidence" value="ECO:0000250"/>
    <property type="project" value="MGI"/>
</dbReference>
<dbReference type="GO" id="GO:0003779">
    <property type="term" value="F:actin binding"/>
    <property type="evidence" value="ECO:0007669"/>
    <property type="project" value="UniProtKB-KW"/>
</dbReference>
<dbReference type="GO" id="GO:0008285">
    <property type="term" value="P:negative regulation of cell population proliferation"/>
    <property type="evidence" value="ECO:0000314"/>
    <property type="project" value="MGI"/>
</dbReference>
<dbReference type="GO" id="GO:0031175">
    <property type="term" value="P:neuron projection development"/>
    <property type="evidence" value="ECO:0000315"/>
    <property type="project" value="MGI"/>
</dbReference>
<dbReference type="CDD" id="cd21191">
    <property type="entry name" value="CH_CLMN_rpt1"/>
    <property type="match status" value="1"/>
</dbReference>
<dbReference type="CDD" id="cd21245">
    <property type="entry name" value="CH_CLMN_rpt2"/>
    <property type="match status" value="1"/>
</dbReference>
<dbReference type="FunFam" id="1.10.418.10:FF:000057">
    <property type="entry name" value="Calmin"/>
    <property type="match status" value="1"/>
</dbReference>
<dbReference type="FunFam" id="1.10.418.10:FF:000063">
    <property type="entry name" value="Calmin"/>
    <property type="match status" value="1"/>
</dbReference>
<dbReference type="Gene3D" id="1.10.418.10">
    <property type="entry name" value="Calponin-like domain"/>
    <property type="match status" value="2"/>
</dbReference>
<dbReference type="InterPro" id="IPR001589">
    <property type="entry name" value="Actinin_actin-bd_CS"/>
</dbReference>
<dbReference type="InterPro" id="IPR001715">
    <property type="entry name" value="CH_dom"/>
</dbReference>
<dbReference type="InterPro" id="IPR036872">
    <property type="entry name" value="CH_dom_sf"/>
</dbReference>
<dbReference type="InterPro" id="IPR047827">
    <property type="entry name" value="CLMN_CH_first"/>
</dbReference>
<dbReference type="InterPro" id="IPR047826">
    <property type="entry name" value="CLMN_CH_second"/>
</dbReference>
<dbReference type="InterPro" id="IPR052403">
    <property type="entry name" value="LINC-complex_assoc"/>
</dbReference>
<dbReference type="PANTHER" id="PTHR47535:SF7">
    <property type="entry name" value="CALMIN"/>
    <property type="match status" value="1"/>
</dbReference>
<dbReference type="PANTHER" id="PTHR47535">
    <property type="entry name" value="MUSCLE-SPECIFIC PROTEIN 300 KDA, ISOFORM G"/>
    <property type="match status" value="1"/>
</dbReference>
<dbReference type="Pfam" id="PF00307">
    <property type="entry name" value="CH"/>
    <property type="match status" value="2"/>
</dbReference>
<dbReference type="SMART" id="SM00033">
    <property type="entry name" value="CH"/>
    <property type="match status" value="2"/>
</dbReference>
<dbReference type="SUPFAM" id="SSF47576">
    <property type="entry name" value="Calponin-homology domain, CH-domain"/>
    <property type="match status" value="1"/>
</dbReference>
<dbReference type="PROSITE" id="PS00019">
    <property type="entry name" value="ACTININ_1"/>
    <property type="match status" value="1"/>
</dbReference>
<dbReference type="PROSITE" id="PS00020">
    <property type="entry name" value="ACTININ_2"/>
    <property type="match status" value="1"/>
</dbReference>
<dbReference type="PROSITE" id="PS50021">
    <property type="entry name" value="CH"/>
    <property type="match status" value="2"/>
</dbReference>
<proteinExistence type="evidence at protein level"/>
<organism>
    <name type="scientific">Mus musculus</name>
    <name type="common">Mouse</name>
    <dbReference type="NCBI Taxonomy" id="10090"/>
    <lineage>
        <taxon>Eukaryota</taxon>
        <taxon>Metazoa</taxon>
        <taxon>Chordata</taxon>
        <taxon>Craniata</taxon>
        <taxon>Vertebrata</taxon>
        <taxon>Euteleostomi</taxon>
        <taxon>Mammalia</taxon>
        <taxon>Eutheria</taxon>
        <taxon>Euarchontoglires</taxon>
        <taxon>Glires</taxon>
        <taxon>Rodentia</taxon>
        <taxon>Myomorpha</taxon>
        <taxon>Muroidea</taxon>
        <taxon>Muridae</taxon>
        <taxon>Murinae</taxon>
        <taxon>Mus</taxon>
        <taxon>Mus</taxon>
    </lineage>
</organism>
<name>CLMN_MOUSE</name>